<keyword id="KW-0014">AIDS</keyword>
<keyword id="KW-0053">Apoptosis</keyword>
<keyword id="KW-1043">Host membrane</keyword>
<keyword id="KW-0945">Host-virus interaction</keyword>
<keyword id="KW-1090">Inhibition of host innate immune response by virus</keyword>
<keyword id="KW-1084">Inhibition of host tetherin by virus</keyword>
<keyword id="KW-0407">Ion channel</keyword>
<keyword id="KW-0406">Ion transport</keyword>
<keyword id="KW-0472">Membrane</keyword>
<keyword id="KW-0597">Phosphoprotein</keyword>
<keyword id="KW-1185">Reference proteome</keyword>
<keyword id="KW-0812">Transmembrane</keyword>
<keyword id="KW-1133">Transmembrane helix</keyword>
<keyword id="KW-0813">Transport</keyword>
<keyword id="KW-0899">Viral immunoevasion</keyword>
<dbReference type="EMBL" id="AF005494">
    <property type="protein sequence ID" value="AAD03173.1"/>
    <property type="molecule type" value="Genomic_DNA"/>
</dbReference>
<dbReference type="Proteomes" id="UP000007687">
    <property type="component" value="Segment"/>
</dbReference>
<dbReference type="GO" id="GO:0033644">
    <property type="term" value="C:host cell membrane"/>
    <property type="evidence" value="ECO:0007669"/>
    <property type="project" value="UniProtKB-SubCell"/>
</dbReference>
<dbReference type="GO" id="GO:0016020">
    <property type="term" value="C:membrane"/>
    <property type="evidence" value="ECO:0007669"/>
    <property type="project" value="UniProtKB-UniRule"/>
</dbReference>
<dbReference type="GO" id="GO:0042609">
    <property type="term" value="F:CD4 receptor binding"/>
    <property type="evidence" value="ECO:0007669"/>
    <property type="project" value="UniProtKB-UniRule"/>
</dbReference>
<dbReference type="GO" id="GO:0005261">
    <property type="term" value="F:monoatomic cation channel activity"/>
    <property type="evidence" value="ECO:0007669"/>
    <property type="project" value="UniProtKB-UniRule"/>
</dbReference>
<dbReference type="GO" id="GO:0032801">
    <property type="term" value="P:receptor catabolic process"/>
    <property type="evidence" value="ECO:0007669"/>
    <property type="project" value="UniProtKB-UniRule"/>
</dbReference>
<dbReference type="GO" id="GO:0052170">
    <property type="term" value="P:symbiont-mediated suppression of host innate immune response"/>
    <property type="evidence" value="ECO:0007669"/>
    <property type="project" value="UniProtKB-KW"/>
</dbReference>
<dbReference type="GO" id="GO:0039502">
    <property type="term" value="P:symbiont-mediated suppression of host type I interferon-mediated signaling pathway"/>
    <property type="evidence" value="ECO:0007669"/>
    <property type="project" value="UniProtKB-UniRule"/>
</dbReference>
<dbReference type="GO" id="GO:0039587">
    <property type="term" value="P:symbiont-mediated-mediated suppression of host tetherin activity"/>
    <property type="evidence" value="ECO:0007669"/>
    <property type="project" value="UniProtKB-UniRule"/>
</dbReference>
<dbReference type="GO" id="GO:0019076">
    <property type="term" value="P:viral release from host cell"/>
    <property type="evidence" value="ECO:0007669"/>
    <property type="project" value="UniProtKB-UniRule"/>
</dbReference>
<dbReference type="Gene3D" id="1.10.195.10">
    <property type="entry name" value="HIV-1 VPU cytoplasmic domain"/>
    <property type="match status" value="1"/>
</dbReference>
<dbReference type="HAMAP" id="MF_04082">
    <property type="entry name" value="HIV_VPU"/>
    <property type="match status" value="1"/>
</dbReference>
<dbReference type="InterPro" id="IPR008187">
    <property type="entry name" value="Vpu"/>
</dbReference>
<dbReference type="InterPro" id="IPR009032">
    <property type="entry name" value="Vpu_cyt_dom_sf"/>
</dbReference>
<dbReference type="Pfam" id="PF00558">
    <property type="entry name" value="Vpu"/>
    <property type="match status" value="1"/>
</dbReference>
<dbReference type="SUPFAM" id="SSF57647">
    <property type="entry name" value="HIV-1 VPU cytoplasmic domain"/>
    <property type="match status" value="1"/>
</dbReference>
<evidence type="ECO:0000255" key="1">
    <source>
        <dbReference type="HAMAP-Rule" id="MF_04082"/>
    </source>
</evidence>
<accession>O70891</accession>
<proteinExistence type="inferred from homology"/>
<comment type="function">
    <text evidence="1">Enhances virion budding by targeting host CD4 and Tetherin/BST2 to proteasome degradation. Degradation of CD4 prevents any unwanted premature interactions between viral Env and its host receptor CD4 in the endoplasmic reticulum. Degradation of antiretroviral protein Tetherin/BST2 is important for virion budding, as BST2 tethers new viral particles to the host cell membrane. Mechanistically, Vpu bridges either CD4 or BST2 to BTRC, a substrate recognition subunit of the Skp1/Cullin/F-box protein E3 ubiquitin ligase, induces their ubiquitination and subsequent proteasomal degradation. The alteration of the E3 ligase specificity by Vpu seems to promote the degradation of host IKBKB, leading to NF-kappa-B down-regulation and subsequent apoptosis. Acts as a viroporin that forms an oligomeric ion channel in membranes. Modulates the host DNA repair mechanisms to promote degradation of nuclear viral cDNA in cells that are already productively infected in order to suppress immune sensing and proviral hyper-integration (superinfection). Manipulates PML-NBs and modulates SUMOylation of host BLM protein thereby enhancing its DNA-end processing activity toward viral unintegrated linear DNA. Also inhibits RAD52-mediated homologous repair of viral cDNA, preventing the generation of dead-end circular forms of single copies of the long terminal repeat and permitting sustained nucleolytic attack.</text>
</comment>
<comment type="activity regulation">
    <text evidence="1">Ion channel activity is inhibited by hexamethylene amiloride in vitro.</text>
</comment>
<comment type="subunit">
    <text evidence="1">Homopentamer. Interacts with host CD4 and BRTC; these interactions induce proteasomal degradation of CD4. Interacts with host BST2; this interaction leads to the degradation of host BST2. Interacts with host FBXW11. Interacts with host AP1M1; this interaction plays a role in the mistrafficking and subsequent degradation of host BST2. Interacts with host RANBP2; this interaction allows Vpu to down-regulate host BLM sumoylation.</text>
</comment>
<comment type="subcellular location">
    <subcellularLocation>
        <location evidence="1">Host membrane</location>
        <topology evidence="1">Single-pass type I membrane protein</topology>
    </subcellularLocation>
</comment>
<comment type="domain">
    <text evidence="1">The N-terminus and transmembrane domains are required for self-oligomerization and proper virion budding, whereas the cytoplasmic domain is required for CD4 degradation. The cytoplasmic domain is composed of 2 amphipathic alpha helix that form a U-shape.</text>
</comment>
<comment type="PTM">
    <text evidence="1">Phosphorylated by host CK2. This phosphorylation is necessary for interaction with human BTRC and degradation of CD4.</text>
</comment>
<comment type="miscellaneous">
    <text evidence="1">HIV-1 lineages are divided in three main groups, M (for Major), O (for Outlier), and N (for New, or Non-M, Non-O). The vast majority of strains found worldwide belong to the group M. Group O seems to be endemic to and largely confined to Cameroon and neighboring countries in West Central Africa, where these viruses represent a small minority of HIV-1 strains. The group N is represented by a limited number of isolates from Cameroonian persons. The group M is further subdivided in 9 clades or subtypes (A to D, F to H, J and K).</text>
</comment>
<comment type="similarity">
    <text evidence="1">Belongs to the HIV-1 VPU protein family.</text>
</comment>
<name>VPU_HV193</name>
<gene>
    <name evidence="1" type="primary">vpu</name>
</gene>
<organismHost>
    <name type="scientific">Homo sapiens</name>
    <name type="common">Human</name>
    <dbReference type="NCBI Taxonomy" id="9606"/>
</organismHost>
<reference key="1">
    <citation type="journal article" date="1998" name="J. Virol.">
        <title>A comprehensive panel of near-full-length clones and reference sequences for non-subtype B isolates of human immunodeficiency virus type 1.</title>
        <authorList>
            <person name="Gao F."/>
            <person name="Robertson D.L."/>
            <person name="Carruthers C.D."/>
            <person name="Morrison S.G."/>
            <person name="Jian B."/>
            <person name="Chen Y."/>
            <person name="Barre-Sinoussi F."/>
            <person name="Girard M."/>
            <person name="Srinivasan A."/>
            <person name="Abimiku A.G."/>
            <person name="Shaw G.M."/>
            <person name="Sharp P.M."/>
            <person name="Hahn B.H."/>
        </authorList>
    </citation>
    <scope>NUCLEOTIDE SEQUENCE [GENOMIC DNA]</scope>
</reference>
<organism>
    <name type="scientific">Human immunodeficiency virus type 1 group M subtype F1 (isolate 93BR020)</name>
    <name type="common">HIV-1</name>
    <dbReference type="NCBI Taxonomy" id="388814"/>
    <lineage>
        <taxon>Viruses</taxon>
        <taxon>Riboviria</taxon>
        <taxon>Pararnavirae</taxon>
        <taxon>Artverviricota</taxon>
        <taxon>Revtraviricetes</taxon>
        <taxon>Ortervirales</taxon>
        <taxon>Retroviridae</taxon>
        <taxon>Orthoretrovirinae</taxon>
        <taxon>Lentivirus</taxon>
        <taxon>Human immunodeficiency virus type 1</taxon>
    </lineage>
</organism>
<feature type="chain" id="PRO_0000244324" description="Protein Vpu">
    <location>
        <begin position="1"/>
        <end position="81"/>
    </location>
</feature>
<feature type="topological domain" description="Extracellular" evidence="1">
    <location>
        <begin position="1"/>
        <end position="7"/>
    </location>
</feature>
<feature type="transmembrane region" description="Helical" evidence="1">
    <location>
        <begin position="8"/>
        <end position="28"/>
    </location>
</feature>
<feature type="topological domain" description="Cytoplasmic" evidence="1">
    <location>
        <begin position="29"/>
        <end position="81"/>
    </location>
</feature>
<feature type="modified residue" description="Phosphoserine; by host CK2" evidence="1">
    <location>
        <position position="53"/>
    </location>
</feature>
<feature type="modified residue" description="Phosphoserine; by host CK2" evidence="1">
    <location>
        <position position="57"/>
    </location>
</feature>
<sequence length="81" mass="8941">MSNLLAIGIAALIVALIITIVVWTIAYIEYKKLVRQRKINRLYKRISERAEDSGNESEGDAEELAALGEVGPFIPGDINNL</sequence>
<protein>
    <recommendedName>
        <fullName evidence="1">Protein Vpu</fullName>
    </recommendedName>
    <alternativeName>
        <fullName evidence="1">U ORF protein</fullName>
    </alternativeName>
    <alternativeName>
        <fullName evidence="1">Viral protein U</fullName>
    </alternativeName>
</protein>